<protein>
    <recommendedName>
        <fullName>Alpha-amylase inhibitor Haim-1</fullName>
    </recommendedName>
    <alternativeName>
        <fullName>Haim I</fullName>
    </alternativeName>
</protein>
<name>IAA1_STRGS</name>
<reference key="1">
    <citation type="journal article" date="1985" name="J. Biochem.">
        <title>Amino acid sequence of protein alpha-amylase inhibitor from Streptomyces griseosporeus YM-25.</title>
        <authorList>
            <person name="Murai H."/>
            <person name="Hara S."/>
            <person name="Ikenaka T."/>
            <person name="Goto A."/>
            <person name="Arai M."/>
            <person name="Murao S."/>
        </authorList>
    </citation>
    <scope>PROTEIN SEQUENCE</scope>
    <scope>DISULFIDE BONDS</scope>
    <source>
        <strain>YM-25</strain>
    </source>
</reference>
<reference key="2">
    <citation type="journal article" date="1990" name="J. Biochem.">
        <title>Three-dimensional structure of an alpha-amylase inhibitor HAIM as determined by nuclear magnetic resonance methods.</title>
        <authorList>
            <person name="Yoshida M."/>
            <person name="Nakai T."/>
            <person name="Fukuhara K."/>
            <person name="Saitoh S."/>
            <person name="Yoshikawa W."/>
            <person name="Kobayashi Y."/>
            <person name="Nakamura H."/>
        </authorList>
    </citation>
    <scope>STRUCTURE BY NMR</scope>
    <source>
        <strain>YM-25</strain>
    </source>
</reference>
<reference key="3">
    <citation type="journal article" date="1994" name="J. Biochem.">
        <title>Crystallization and preliminary crystallographic data of the alpha-amylase inhibitors, Haim I and Paim I.</title>
        <authorList>
            <person name="Miyagawa M."/>
            <person name="Fukuhara K."/>
            <person name="Katayanagi K."/>
            <person name="Ishimaru K."/>
            <person name="Morikawa K."/>
            <person name="Matsuzaki T."/>
            <person name="Sato Y."/>
            <person name="Hara S."/>
            <person name="Ikenaka T."/>
            <person name="Arai M."/>
            <person name="Murao S."/>
        </authorList>
    </citation>
    <scope>CRYSTALLIZATION</scope>
</reference>
<proteinExistence type="evidence at protein level"/>
<dbReference type="PIR" id="JX0297">
    <property type="entry name" value="JX0297"/>
</dbReference>
<dbReference type="BMRB" id="P01093"/>
<dbReference type="SMR" id="P01093"/>
<dbReference type="GO" id="GO:0015066">
    <property type="term" value="F:alpha-amylase inhibitor activity"/>
    <property type="evidence" value="ECO:0007669"/>
    <property type="project" value="UniProtKB-KW"/>
</dbReference>
<dbReference type="Gene3D" id="2.60.40.20">
    <property type="entry name" value="Alpha-amylase inhibitor"/>
    <property type="match status" value="1"/>
</dbReference>
<dbReference type="InterPro" id="IPR000833">
    <property type="entry name" value="A-amylase_inhib"/>
</dbReference>
<dbReference type="InterPro" id="IPR036379">
    <property type="entry name" value="A-amylase_inhib_sf"/>
</dbReference>
<dbReference type="Pfam" id="PF01356">
    <property type="entry name" value="A_amylase_inhib"/>
    <property type="match status" value="1"/>
</dbReference>
<dbReference type="PIRSF" id="PIRSF001658">
    <property type="entry name" value="Amylase_inhib"/>
    <property type="match status" value="1"/>
</dbReference>
<dbReference type="SMART" id="SM00783">
    <property type="entry name" value="A_amylase_inhib"/>
    <property type="match status" value="1"/>
</dbReference>
<dbReference type="SUPFAM" id="SSF49498">
    <property type="entry name" value="alpha-Amylase inhibitor tendamistat"/>
    <property type="match status" value="1"/>
</dbReference>
<keyword id="KW-0022">Alpha-amylase inhibitor</keyword>
<keyword id="KW-0903">Direct protein sequencing</keyword>
<keyword id="KW-1015">Disulfide bond</keyword>
<feature type="chain" id="PRO_0000203593" description="Alpha-amylase inhibitor Haim-1">
    <location>
        <begin position="1"/>
        <end position="78"/>
    </location>
</feature>
<feature type="disulfide bond" evidence="1">
    <location>
        <begin position="11"/>
        <end position="27"/>
    </location>
</feature>
<feature type="disulfide bond" evidence="1">
    <location>
        <begin position="45"/>
        <end position="72"/>
    </location>
</feature>
<comment type="function">
    <text>Inhibits mammalian alpha-amylases specifically but has no action on plant and microbial alpha-amylases.</text>
</comment>
<accession>P01093</accession>
<organism>
    <name type="scientific">Streptomyces griseosporeus</name>
    <dbReference type="NCBI Taxonomy" id="1910"/>
    <lineage>
        <taxon>Bacteria</taxon>
        <taxon>Bacillati</taxon>
        <taxon>Actinomycetota</taxon>
        <taxon>Actinomycetes</taxon>
        <taxon>Kitasatosporales</taxon>
        <taxon>Streptomycetaceae</taxon>
        <taxon>Streptomyces</taxon>
    </lineage>
</organism>
<evidence type="ECO:0000269" key="1">
    <source>
    </source>
</evidence>
<sequence>DAGNRIAAPACVHFTADWRYTFVTNDCSIDYSVTVAYGDGTDVPCRSANPGDILTFPGYGTRGNEVLGAVLCATDGSA</sequence>